<feature type="chain" id="PRO_0000172984" description="Dephospho-CoA kinase">
    <location>
        <begin position="1"/>
        <end position="207"/>
    </location>
</feature>
<feature type="domain" description="DPCK" evidence="1">
    <location>
        <begin position="10"/>
        <end position="207"/>
    </location>
</feature>
<feature type="binding site" evidence="1">
    <location>
        <begin position="18"/>
        <end position="23"/>
    </location>
    <ligand>
        <name>ATP</name>
        <dbReference type="ChEBI" id="CHEBI:30616"/>
    </ligand>
</feature>
<reference key="1">
    <citation type="journal article" date="2003" name="Proc. Natl. Acad. Sci. U.S.A.">
        <title>The complete genome sequence of the Arabidopsis and tomato pathogen Pseudomonas syringae pv. tomato DC3000.</title>
        <authorList>
            <person name="Buell C.R."/>
            <person name="Joardar V."/>
            <person name="Lindeberg M."/>
            <person name="Selengut J."/>
            <person name="Paulsen I.T."/>
            <person name="Gwinn M.L."/>
            <person name="Dodson R.J."/>
            <person name="DeBoy R.T."/>
            <person name="Durkin A.S."/>
            <person name="Kolonay J.F."/>
            <person name="Madupu R."/>
            <person name="Daugherty S.C."/>
            <person name="Brinkac L.M."/>
            <person name="Beanan M.J."/>
            <person name="Haft D.H."/>
            <person name="Nelson W.C."/>
            <person name="Davidsen T.M."/>
            <person name="Zafar N."/>
            <person name="Zhou L."/>
            <person name="Liu J."/>
            <person name="Yuan Q."/>
            <person name="Khouri H.M."/>
            <person name="Fedorova N.B."/>
            <person name="Tran B."/>
            <person name="Russell D."/>
            <person name="Berry K.J."/>
            <person name="Utterback T.R."/>
            <person name="Van Aken S.E."/>
            <person name="Feldblyum T.V."/>
            <person name="D'Ascenzo M."/>
            <person name="Deng W.-L."/>
            <person name="Ramos A.R."/>
            <person name="Alfano J.R."/>
            <person name="Cartinhour S."/>
            <person name="Chatterjee A.K."/>
            <person name="Delaney T.P."/>
            <person name="Lazarowitz S.G."/>
            <person name="Martin G.B."/>
            <person name="Schneider D.J."/>
            <person name="Tang X."/>
            <person name="Bender C.L."/>
            <person name="White O."/>
            <person name="Fraser C.M."/>
            <person name="Collmer A."/>
        </authorList>
    </citation>
    <scope>NUCLEOTIDE SEQUENCE [LARGE SCALE GENOMIC DNA]</scope>
    <source>
        <strain>ATCC BAA-871 / DC3000</strain>
    </source>
</reference>
<organism>
    <name type="scientific">Pseudomonas syringae pv. tomato (strain ATCC BAA-871 / DC3000)</name>
    <dbReference type="NCBI Taxonomy" id="223283"/>
    <lineage>
        <taxon>Bacteria</taxon>
        <taxon>Pseudomonadati</taxon>
        <taxon>Pseudomonadota</taxon>
        <taxon>Gammaproteobacteria</taxon>
        <taxon>Pseudomonadales</taxon>
        <taxon>Pseudomonadaceae</taxon>
        <taxon>Pseudomonas</taxon>
    </lineage>
</organism>
<protein>
    <recommendedName>
        <fullName evidence="1">Dephospho-CoA kinase</fullName>
        <ecNumber evidence="1">2.7.1.24</ecNumber>
    </recommendedName>
    <alternativeName>
        <fullName evidence="1">Dephosphocoenzyme A kinase</fullName>
    </alternativeName>
</protein>
<gene>
    <name evidence="1" type="primary">coaE</name>
    <name type="ordered locus">PSPTO_0923</name>
</gene>
<comment type="function">
    <text evidence="1">Catalyzes the phosphorylation of the 3'-hydroxyl group of dephosphocoenzyme A to form coenzyme A.</text>
</comment>
<comment type="catalytic activity">
    <reaction evidence="1">
        <text>3'-dephospho-CoA + ATP = ADP + CoA + H(+)</text>
        <dbReference type="Rhea" id="RHEA:18245"/>
        <dbReference type="ChEBI" id="CHEBI:15378"/>
        <dbReference type="ChEBI" id="CHEBI:30616"/>
        <dbReference type="ChEBI" id="CHEBI:57287"/>
        <dbReference type="ChEBI" id="CHEBI:57328"/>
        <dbReference type="ChEBI" id="CHEBI:456216"/>
        <dbReference type="EC" id="2.7.1.24"/>
    </reaction>
</comment>
<comment type="pathway">
    <text evidence="1">Cofactor biosynthesis; coenzyme A biosynthesis; CoA from (R)-pantothenate: step 5/5.</text>
</comment>
<comment type="subcellular location">
    <subcellularLocation>
        <location evidence="1">Cytoplasm</location>
    </subcellularLocation>
</comment>
<comment type="similarity">
    <text evidence="1">Belongs to the CoaE family.</text>
</comment>
<keyword id="KW-0067">ATP-binding</keyword>
<keyword id="KW-0173">Coenzyme A biosynthesis</keyword>
<keyword id="KW-0963">Cytoplasm</keyword>
<keyword id="KW-0418">Kinase</keyword>
<keyword id="KW-0547">Nucleotide-binding</keyword>
<keyword id="KW-1185">Reference proteome</keyword>
<keyword id="KW-0808">Transferase</keyword>
<proteinExistence type="inferred from homology"/>
<evidence type="ECO:0000255" key="1">
    <source>
        <dbReference type="HAMAP-Rule" id="MF_00376"/>
    </source>
</evidence>
<accession>Q888U3</accession>
<sequence length="207" mass="23176">MTHPDQKPWILGLTGGIGSGKSAAAQCFIDLGIDTVDADHAARWVVEPGRPALEQIATHFGNGVLQASGALDRGALRKLIFENPEQRRWLEALLHPLINQEIVSHLAKAKSPYAILVSPLLIESGQSRMVQRLLVIDVPQQVQIERTMLRDSSSQEQVEAILKVQIQREDRLRHADDVLVNDRDHAWLNSEVERLHHFYLTLRGGQS</sequence>
<name>COAE_PSESM</name>
<dbReference type="EC" id="2.7.1.24" evidence="1"/>
<dbReference type="EMBL" id="AE016853">
    <property type="protein sequence ID" value="AAO54457.1"/>
    <property type="molecule type" value="Genomic_DNA"/>
</dbReference>
<dbReference type="RefSeq" id="NP_790762.1">
    <property type="nucleotide sequence ID" value="NC_004578.1"/>
</dbReference>
<dbReference type="RefSeq" id="WP_005770017.1">
    <property type="nucleotide sequence ID" value="NC_004578.1"/>
</dbReference>
<dbReference type="SMR" id="Q888U3"/>
<dbReference type="STRING" id="223283.PSPTO_0923"/>
<dbReference type="GeneID" id="1182552"/>
<dbReference type="KEGG" id="pst:PSPTO_0923"/>
<dbReference type="PATRIC" id="fig|223283.9.peg.933"/>
<dbReference type="eggNOG" id="COG0237">
    <property type="taxonomic scope" value="Bacteria"/>
</dbReference>
<dbReference type="HOGENOM" id="CLU_057180_1_2_6"/>
<dbReference type="OrthoDB" id="9812943at2"/>
<dbReference type="PhylomeDB" id="Q888U3"/>
<dbReference type="UniPathway" id="UPA00241">
    <property type="reaction ID" value="UER00356"/>
</dbReference>
<dbReference type="Proteomes" id="UP000002515">
    <property type="component" value="Chromosome"/>
</dbReference>
<dbReference type="GO" id="GO:0005737">
    <property type="term" value="C:cytoplasm"/>
    <property type="evidence" value="ECO:0007669"/>
    <property type="project" value="UniProtKB-SubCell"/>
</dbReference>
<dbReference type="GO" id="GO:0005524">
    <property type="term" value="F:ATP binding"/>
    <property type="evidence" value="ECO:0007669"/>
    <property type="project" value="UniProtKB-UniRule"/>
</dbReference>
<dbReference type="GO" id="GO:0004140">
    <property type="term" value="F:dephospho-CoA kinase activity"/>
    <property type="evidence" value="ECO:0007669"/>
    <property type="project" value="UniProtKB-UniRule"/>
</dbReference>
<dbReference type="GO" id="GO:0015937">
    <property type="term" value="P:coenzyme A biosynthetic process"/>
    <property type="evidence" value="ECO:0007669"/>
    <property type="project" value="UniProtKB-UniRule"/>
</dbReference>
<dbReference type="CDD" id="cd02022">
    <property type="entry name" value="DPCK"/>
    <property type="match status" value="1"/>
</dbReference>
<dbReference type="Gene3D" id="3.40.50.300">
    <property type="entry name" value="P-loop containing nucleotide triphosphate hydrolases"/>
    <property type="match status" value="1"/>
</dbReference>
<dbReference type="HAMAP" id="MF_00376">
    <property type="entry name" value="Dephospho_CoA_kinase"/>
    <property type="match status" value="1"/>
</dbReference>
<dbReference type="InterPro" id="IPR001977">
    <property type="entry name" value="Depp_CoAkinase"/>
</dbReference>
<dbReference type="InterPro" id="IPR027417">
    <property type="entry name" value="P-loop_NTPase"/>
</dbReference>
<dbReference type="NCBIfam" id="TIGR00152">
    <property type="entry name" value="dephospho-CoA kinase"/>
    <property type="match status" value="1"/>
</dbReference>
<dbReference type="PANTHER" id="PTHR10695:SF46">
    <property type="entry name" value="BIFUNCTIONAL COENZYME A SYNTHASE-RELATED"/>
    <property type="match status" value="1"/>
</dbReference>
<dbReference type="PANTHER" id="PTHR10695">
    <property type="entry name" value="DEPHOSPHO-COA KINASE-RELATED"/>
    <property type="match status" value="1"/>
</dbReference>
<dbReference type="Pfam" id="PF01121">
    <property type="entry name" value="CoaE"/>
    <property type="match status" value="1"/>
</dbReference>
<dbReference type="SUPFAM" id="SSF52540">
    <property type="entry name" value="P-loop containing nucleoside triphosphate hydrolases"/>
    <property type="match status" value="1"/>
</dbReference>
<dbReference type="PROSITE" id="PS51219">
    <property type="entry name" value="DPCK"/>
    <property type="match status" value="1"/>
</dbReference>